<dbReference type="EC" id="6.3.1.21" evidence="1"/>
<dbReference type="EMBL" id="CP000753">
    <property type="protein sequence ID" value="ABS07211.1"/>
    <property type="molecule type" value="Genomic_DNA"/>
</dbReference>
<dbReference type="RefSeq" id="WP_012088483.1">
    <property type="nucleotide sequence ID" value="NC_009665.1"/>
</dbReference>
<dbReference type="SMR" id="A6WK72"/>
<dbReference type="KEGG" id="sbm:Shew185_1059"/>
<dbReference type="HOGENOM" id="CLU_011534_1_3_6"/>
<dbReference type="UniPathway" id="UPA00074">
    <property type="reaction ID" value="UER00127"/>
</dbReference>
<dbReference type="GO" id="GO:0005829">
    <property type="term" value="C:cytosol"/>
    <property type="evidence" value="ECO:0007669"/>
    <property type="project" value="TreeGrafter"/>
</dbReference>
<dbReference type="GO" id="GO:0005524">
    <property type="term" value="F:ATP binding"/>
    <property type="evidence" value="ECO:0007669"/>
    <property type="project" value="UniProtKB-UniRule"/>
</dbReference>
<dbReference type="GO" id="GO:0000287">
    <property type="term" value="F:magnesium ion binding"/>
    <property type="evidence" value="ECO:0007669"/>
    <property type="project" value="InterPro"/>
</dbReference>
<dbReference type="GO" id="GO:0043815">
    <property type="term" value="F:phosphoribosylglycinamide formyltransferase 2 activity"/>
    <property type="evidence" value="ECO:0007669"/>
    <property type="project" value="UniProtKB-UniRule"/>
</dbReference>
<dbReference type="GO" id="GO:0004644">
    <property type="term" value="F:phosphoribosylglycinamide formyltransferase activity"/>
    <property type="evidence" value="ECO:0007669"/>
    <property type="project" value="InterPro"/>
</dbReference>
<dbReference type="GO" id="GO:0006189">
    <property type="term" value="P:'de novo' IMP biosynthetic process"/>
    <property type="evidence" value="ECO:0007669"/>
    <property type="project" value="UniProtKB-UniRule"/>
</dbReference>
<dbReference type="FunFam" id="3.30.1490.20:FF:000013">
    <property type="entry name" value="Formate-dependent phosphoribosylglycinamide formyltransferase"/>
    <property type="match status" value="1"/>
</dbReference>
<dbReference type="FunFam" id="3.30.470.20:FF:000027">
    <property type="entry name" value="Formate-dependent phosphoribosylglycinamide formyltransferase"/>
    <property type="match status" value="1"/>
</dbReference>
<dbReference type="FunFam" id="3.40.50.20:FF:000007">
    <property type="entry name" value="Formate-dependent phosphoribosylglycinamide formyltransferase"/>
    <property type="match status" value="1"/>
</dbReference>
<dbReference type="Gene3D" id="3.40.50.20">
    <property type="match status" value="1"/>
</dbReference>
<dbReference type="Gene3D" id="3.30.1490.20">
    <property type="entry name" value="ATP-grasp fold, A domain"/>
    <property type="match status" value="1"/>
</dbReference>
<dbReference type="Gene3D" id="3.30.470.20">
    <property type="entry name" value="ATP-grasp fold, B domain"/>
    <property type="match status" value="1"/>
</dbReference>
<dbReference type="HAMAP" id="MF_01643">
    <property type="entry name" value="PurT"/>
    <property type="match status" value="1"/>
</dbReference>
<dbReference type="InterPro" id="IPR011761">
    <property type="entry name" value="ATP-grasp"/>
</dbReference>
<dbReference type="InterPro" id="IPR003135">
    <property type="entry name" value="ATP-grasp_carboxylate-amine"/>
</dbReference>
<dbReference type="InterPro" id="IPR013815">
    <property type="entry name" value="ATP_grasp_subdomain_1"/>
</dbReference>
<dbReference type="InterPro" id="IPR016185">
    <property type="entry name" value="PreATP-grasp_dom_sf"/>
</dbReference>
<dbReference type="InterPro" id="IPR005862">
    <property type="entry name" value="PurT"/>
</dbReference>
<dbReference type="InterPro" id="IPR054350">
    <property type="entry name" value="PurT/PurK_preATP-grasp"/>
</dbReference>
<dbReference type="InterPro" id="IPR048740">
    <property type="entry name" value="PurT_C"/>
</dbReference>
<dbReference type="InterPro" id="IPR011054">
    <property type="entry name" value="Rudment_hybrid_motif"/>
</dbReference>
<dbReference type="NCBIfam" id="NF006766">
    <property type="entry name" value="PRK09288.1"/>
    <property type="match status" value="1"/>
</dbReference>
<dbReference type="NCBIfam" id="TIGR01142">
    <property type="entry name" value="purT"/>
    <property type="match status" value="1"/>
</dbReference>
<dbReference type="PANTHER" id="PTHR43055">
    <property type="entry name" value="FORMATE-DEPENDENT PHOSPHORIBOSYLGLYCINAMIDE FORMYLTRANSFERASE"/>
    <property type="match status" value="1"/>
</dbReference>
<dbReference type="PANTHER" id="PTHR43055:SF1">
    <property type="entry name" value="FORMATE-DEPENDENT PHOSPHORIBOSYLGLYCINAMIDE FORMYLTRANSFERASE"/>
    <property type="match status" value="1"/>
</dbReference>
<dbReference type="Pfam" id="PF02222">
    <property type="entry name" value="ATP-grasp"/>
    <property type="match status" value="1"/>
</dbReference>
<dbReference type="Pfam" id="PF21244">
    <property type="entry name" value="PurT_C"/>
    <property type="match status" value="1"/>
</dbReference>
<dbReference type="Pfam" id="PF22660">
    <property type="entry name" value="RS_preATP-grasp-like"/>
    <property type="match status" value="1"/>
</dbReference>
<dbReference type="SUPFAM" id="SSF56059">
    <property type="entry name" value="Glutathione synthetase ATP-binding domain-like"/>
    <property type="match status" value="1"/>
</dbReference>
<dbReference type="SUPFAM" id="SSF52440">
    <property type="entry name" value="PreATP-grasp domain"/>
    <property type="match status" value="1"/>
</dbReference>
<dbReference type="SUPFAM" id="SSF51246">
    <property type="entry name" value="Rudiment single hybrid motif"/>
    <property type="match status" value="1"/>
</dbReference>
<dbReference type="PROSITE" id="PS50975">
    <property type="entry name" value="ATP_GRASP"/>
    <property type="match status" value="1"/>
</dbReference>
<protein>
    <recommendedName>
        <fullName evidence="1">Formate-dependent phosphoribosylglycinamide formyltransferase</fullName>
        <ecNumber evidence="1">6.3.1.21</ecNumber>
    </recommendedName>
    <alternativeName>
        <fullName evidence="1">5'-phosphoribosylglycinamide transformylase 2</fullName>
    </alternativeName>
    <alternativeName>
        <fullName evidence="1">Formate-dependent GAR transformylase</fullName>
    </alternativeName>
    <alternativeName>
        <fullName evidence="1">GAR transformylase 2</fullName>
        <shortName evidence="1">GART 2</shortName>
    </alternativeName>
    <alternativeName>
        <fullName evidence="1">Non-folate glycinamide ribonucleotide transformylase</fullName>
    </alternativeName>
    <alternativeName>
        <fullName evidence="1">Phosphoribosylglycinamide formyltransferase 2</fullName>
    </alternativeName>
</protein>
<accession>A6WK72</accession>
<reference key="1">
    <citation type="submission" date="2007-07" db="EMBL/GenBank/DDBJ databases">
        <title>Complete sequence of chromosome of Shewanella baltica OS185.</title>
        <authorList>
            <consortium name="US DOE Joint Genome Institute"/>
            <person name="Copeland A."/>
            <person name="Lucas S."/>
            <person name="Lapidus A."/>
            <person name="Barry K."/>
            <person name="Glavina del Rio T."/>
            <person name="Dalin E."/>
            <person name="Tice H."/>
            <person name="Pitluck S."/>
            <person name="Sims D."/>
            <person name="Brettin T."/>
            <person name="Bruce D."/>
            <person name="Detter J.C."/>
            <person name="Han C."/>
            <person name="Schmutz J."/>
            <person name="Larimer F."/>
            <person name="Land M."/>
            <person name="Hauser L."/>
            <person name="Kyrpides N."/>
            <person name="Mikhailova N."/>
            <person name="Brettar I."/>
            <person name="Rodrigues J."/>
            <person name="Konstantinidis K."/>
            <person name="Tiedje J."/>
            <person name="Richardson P."/>
        </authorList>
    </citation>
    <scope>NUCLEOTIDE SEQUENCE [LARGE SCALE GENOMIC DNA]</scope>
    <source>
        <strain>OS185</strain>
    </source>
</reference>
<proteinExistence type="inferred from homology"/>
<gene>
    <name evidence="1" type="primary">purT</name>
    <name type="ordered locus">Shew185_1059</name>
</gene>
<sequence length="391" mass="42198">MIGTPYTEGARRAMLLGCGELGKEVAIELQRLGVEVIGVDRYANAPAMQVAHRSHVINMLDANALRAVIELEKPHLVIPEIEAIATQTLVDMEAEGVNIIPTARATKLTMDREGIRRLAAETLGLPTSPYFFCDTETEFNQAISEIGVPCVVKPVMSSSGKGQSVIRDIALSHKAWQYAQEGGRAGGGRVIVEGFIPFDYEITLLTISAVNGIHFCAPIGHRQEDGDYRESWQPQAMSDEVLAKSQAIASKVVEALGGYGLFGVELFVKGHEVYFSEVSPRPHDTGLVTLISQDLSEFALHVRAIQGLPIPNIHQHGPSASAVILAEGTSSNIRYQGIAAALEAVNTQLRLFAKPDIDGRRRLGVALARDIDIDSAVSKALDSASKVKVIF</sequence>
<comment type="function">
    <text evidence="1">Involved in the de novo purine biosynthesis. Catalyzes the transfer of formate to 5-phospho-ribosyl-glycinamide (GAR), producing 5-phospho-ribosyl-N-formylglycinamide (FGAR). Formate is provided by PurU via hydrolysis of 10-formyl-tetrahydrofolate.</text>
</comment>
<comment type="catalytic activity">
    <reaction evidence="1">
        <text>N(1)-(5-phospho-beta-D-ribosyl)glycinamide + formate + ATP = N(2)-formyl-N(1)-(5-phospho-beta-D-ribosyl)glycinamide + ADP + phosphate + H(+)</text>
        <dbReference type="Rhea" id="RHEA:24829"/>
        <dbReference type="ChEBI" id="CHEBI:15378"/>
        <dbReference type="ChEBI" id="CHEBI:15740"/>
        <dbReference type="ChEBI" id="CHEBI:30616"/>
        <dbReference type="ChEBI" id="CHEBI:43474"/>
        <dbReference type="ChEBI" id="CHEBI:143788"/>
        <dbReference type="ChEBI" id="CHEBI:147286"/>
        <dbReference type="ChEBI" id="CHEBI:456216"/>
        <dbReference type="EC" id="6.3.1.21"/>
    </reaction>
    <physiologicalReaction direction="left-to-right" evidence="1">
        <dbReference type="Rhea" id="RHEA:24830"/>
    </physiologicalReaction>
</comment>
<comment type="pathway">
    <text evidence="1">Purine metabolism; IMP biosynthesis via de novo pathway; N(2)-formyl-N(1)-(5-phospho-D-ribosyl)glycinamide from N(1)-(5-phospho-D-ribosyl)glycinamide (formate route): step 1/1.</text>
</comment>
<comment type="subunit">
    <text evidence="1">Homodimer.</text>
</comment>
<comment type="similarity">
    <text evidence="1">Belongs to the PurK/PurT family.</text>
</comment>
<organism>
    <name type="scientific">Shewanella baltica (strain OS185)</name>
    <dbReference type="NCBI Taxonomy" id="402882"/>
    <lineage>
        <taxon>Bacteria</taxon>
        <taxon>Pseudomonadati</taxon>
        <taxon>Pseudomonadota</taxon>
        <taxon>Gammaproteobacteria</taxon>
        <taxon>Alteromonadales</taxon>
        <taxon>Shewanellaceae</taxon>
        <taxon>Shewanella</taxon>
    </lineage>
</organism>
<evidence type="ECO:0000255" key="1">
    <source>
        <dbReference type="HAMAP-Rule" id="MF_01643"/>
    </source>
</evidence>
<feature type="chain" id="PRO_0000319230" description="Formate-dependent phosphoribosylglycinamide formyltransferase">
    <location>
        <begin position="1"/>
        <end position="391"/>
    </location>
</feature>
<feature type="domain" description="ATP-grasp" evidence="1">
    <location>
        <begin position="117"/>
        <end position="306"/>
    </location>
</feature>
<feature type="binding site" evidence="1">
    <location>
        <begin position="20"/>
        <end position="21"/>
    </location>
    <ligand>
        <name>N(1)-(5-phospho-beta-D-ribosyl)glycinamide</name>
        <dbReference type="ChEBI" id="CHEBI:143788"/>
    </ligand>
</feature>
<feature type="binding site" evidence="1">
    <location>
        <position position="80"/>
    </location>
    <ligand>
        <name>N(1)-(5-phospho-beta-D-ribosyl)glycinamide</name>
        <dbReference type="ChEBI" id="CHEBI:143788"/>
    </ligand>
</feature>
<feature type="binding site" evidence="1">
    <location>
        <position position="112"/>
    </location>
    <ligand>
        <name>ATP</name>
        <dbReference type="ChEBI" id="CHEBI:30616"/>
    </ligand>
</feature>
<feature type="binding site" evidence="1">
    <location>
        <position position="153"/>
    </location>
    <ligand>
        <name>ATP</name>
        <dbReference type="ChEBI" id="CHEBI:30616"/>
    </ligand>
</feature>
<feature type="binding site" evidence="1">
    <location>
        <begin position="158"/>
        <end position="163"/>
    </location>
    <ligand>
        <name>ATP</name>
        <dbReference type="ChEBI" id="CHEBI:30616"/>
    </ligand>
</feature>
<feature type="binding site" evidence="1">
    <location>
        <begin position="193"/>
        <end position="196"/>
    </location>
    <ligand>
        <name>ATP</name>
        <dbReference type="ChEBI" id="CHEBI:30616"/>
    </ligand>
</feature>
<feature type="binding site" evidence="1">
    <location>
        <position position="201"/>
    </location>
    <ligand>
        <name>ATP</name>
        <dbReference type="ChEBI" id="CHEBI:30616"/>
    </ligand>
</feature>
<feature type="binding site" evidence="1">
    <location>
        <position position="265"/>
    </location>
    <ligand>
        <name>Mg(2+)</name>
        <dbReference type="ChEBI" id="CHEBI:18420"/>
    </ligand>
</feature>
<feature type="binding site" evidence="1">
    <location>
        <position position="277"/>
    </location>
    <ligand>
        <name>Mg(2+)</name>
        <dbReference type="ChEBI" id="CHEBI:18420"/>
    </ligand>
</feature>
<feature type="binding site" evidence="1">
    <location>
        <position position="284"/>
    </location>
    <ligand>
        <name>N(1)-(5-phospho-beta-D-ribosyl)glycinamide</name>
        <dbReference type="ChEBI" id="CHEBI:143788"/>
    </ligand>
</feature>
<feature type="binding site" evidence="1">
    <location>
        <position position="354"/>
    </location>
    <ligand>
        <name>N(1)-(5-phospho-beta-D-ribosyl)glycinamide</name>
        <dbReference type="ChEBI" id="CHEBI:143788"/>
    </ligand>
</feature>
<feature type="binding site" evidence="1">
    <location>
        <begin position="361"/>
        <end position="362"/>
    </location>
    <ligand>
        <name>N(1)-(5-phospho-beta-D-ribosyl)glycinamide</name>
        <dbReference type="ChEBI" id="CHEBI:143788"/>
    </ligand>
</feature>
<name>PURT_SHEB8</name>
<keyword id="KW-0067">ATP-binding</keyword>
<keyword id="KW-0436">Ligase</keyword>
<keyword id="KW-0460">Magnesium</keyword>
<keyword id="KW-0479">Metal-binding</keyword>
<keyword id="KW-0547">Nucleotide-binding</keyword>
<keyword id="KW-0658">Purine biosynthesis</keyword>